<dbReference type="EC" id="2.5.1.18"/>
<dbReference type="Proteomes" id="UP000694918">
    <property type="component" value="Unplaced"/>
</dbReference>
<dbReference type="GO" id="GO:0004364">
    <property type="term" value="F:glutathione transferase activity"/>
    <property type="evidence" value="ECO:0007669"/>
    <property type="project" value="UniProtKB-EC"/>
</dbReference>
<keyword id="KW-0903">Direct protein sequencing</keyword>
<keyword id="KW-1185">Reference proteome</keyword>
<keyword id="KW-0808">Transferase</keyword>
<comment type="function">
    <text evidence="1">Conjugation of reduced glutathione to a wide number of exogenous and endogenous hydrophobic electrophiles. In plants, may have a detoxification role against certain herbicides (By similarity).</text>
</comment>
<comment type="catalytic activity">
    <reaction evidence="1">
        <text>RX + glutathione = an S-substituted glutathione + a halide anion + H(+)</text>
        <dbReference type="Rhea" id="RHEA:16437"/>
        <dbReference type="ChEBI" id="CHEBI:15378"/>
        <dbReference type="ChEBI" id="CHEBI:16042"/>
        <dbReference type="ChEBI" id="CHEBI:17792"/>
        <dbReference type="ChEBI" id="CHEBI:57925"/>
        <dbReference type="ChEBI" id="CHEBI:90779"/>
        <dbReference type="EC" id="2.5.1.18"/>
    </reaction>
</comment>
<comment type="similarity">
    <text evidence="2">Belongs to the GST superfamily. Phi family.</text>
</comment>
<comment type="caution">
    <text evidence="3">The order of the peptides shown is unknown.</text>
</comment>
<name>GSTF1_POPEU</name>
<evidence type="ECO:0000250" key="1">
    <source>
        <dbReference type="UniProtKB" id="P42760"/>
    </source>
</evidence>
<evidence type="ECO:0000255" key="2"/>
<evidence type="ECO:0000269" key="3">
    <source ref="1"/>
</evidence>
<evidence type="ECO:0000303" key="4">
    <source ref="1"/>
</evidence>
<evidence type="ECO:0000305" key="5"/>
<organism>
    <name type="scientific">Populus euphratica</name>
    <name type="common">Euphrates poplar</name>
    <dbReference type="NCBI Taxonomy" id="75702"/>
    <lineage>
        <taxon>Eukaryota</taxon>
        <taxon>Viridiplantae</taxon>
        <taxon>Streptophyta</taxon>
        <taxon>Embryophyta</taxon>
        <taxon>Tracheophyta</taxon>
        <taxon>Spermatophyta</taxon>
        <taxon>Magnoliopsida</taxon>
        <taxon>eudicotyledons</taxon>
        <taxon>Gunneridae</taxon>
        <taxon>Pentapetalae</taxon>
        <taxon>rosids</taxon>
        <taxon>fabids</taxon>
        <taxon>Malpighiales</taxon>
        <taxon>Salicaceae</taxon>
        <taxon>Saliceae</taxon>
        <taxon>Populus</taxon>
    </lineage>
</organism>
<protein>
    <recommendedName>
        <fullName>Glutathione S-transferase 1</fullName>
        <ecNumber>2.5.1.18</ecNumber>
    </recommendedName>
    <alternativeName>
        <fullName>GST class-phi member 1</fullName>
    </alternativeName>
</protein>
<sequence length="21" mass="2552">VLDIYEQKLGQTRVLDIYEQK</sequence>
<proteinExistence type="evidence at protein level"/>
<reference evidence="5" key="1">
    <citation type="thesis" date="2006" institute="ICAT-FCUL" country="Portugal">
        <title>Molecular analysis of Populus euphratica Oliv. response to moderate heat stress.</title>
        <authorList>
            <person name="Ferreira S."/>
        </authorList>
    </citation>
    <scope>PROTEIN SEQUENCE</scope>
    <source>
        <tissue evidence="3">Leaf</tissue>
    </source>
</reference>
<feature type="chain" id="PRO_0000304517" description="Glutathione S-transferase 1">
    <location>
        <begin position="1" status="less than"/>
        <end position="21" status="greater than"/>
    </location>
</feature>
<feature type="non-consecutive residues" evidence="4">
    <location>
        <begin position="13"/>
        <end position="14"/>
    </location>
</feature>
<feature type="non-terminal residue" evidence="4">
    <location>
        <position position="1"/>
    </location>
</feature>
<feature type="non-terminal residue" evidence="4">
    <location>
        <position position="21"/>
    </location>
</feature>
<accession>P84983</accession>